<comment type="catalytic activity">
    <reaction evidence="1">
        <text>tRNA(Asn) + L-asparagine + ATP = L-asparaginyl-tRNA(Asn) + AMP + diphosphate + H(+)</text>
        <dbReference type="Rhea" id="RHEA:11180"/>
        <dbReference type="Rhea" id="RHEA-COMP:9659"/>
        <dbReference type="Rhea" id="RHEA-COMP:9674"/>
        <dbReference type="ChEBI" id="CHEBI:15378"/>
        <dbReference type="ChEBI" id="CHEBI:30616"/>
        <dbReference type="ChEBI" id="CHEBI:33019"/>
        <dbReference type="ChEBI" id="CHEBI:58048"/>
        <dbReference type="ChEBI" id="CHEBI:78442"/>
        <dbReference type="ChEBI" id="CHEBI:78515"/>
        <dbReference type="ChEBI" id="CHEBI:456215"/>
        <dbReference type="EC" id="6.1.1.22"/>
    </reaction>
</comment>
<comment type="subunit">
    <text evidence="1">Homodimer.</text>
</comment>
<comment type="subcellular location">
    <subcellularLocation>
        <location evidence="1">Cytoplasm</location>
    </subcellularLocation>
</comment>
<comment type="similarity">
    <text evidence="1">Belongs to the class-II aminoacyl-tRNA synthetase family.</text>
</comment>
<gene>
    <name evidence="1" type="primary">asnS</name>
    <name type="ordered locus">MAE_04410</name>
</gene>
<keyword id="KW-0030">Aminoacyl-tRNA synthetase</keyword>
<keyword id="KW-0067">ATP-binding</keyword>
<keyword id="KW-0963">Cytoplasm</keyword>
<keyword id="KW-0436">Ligase</keyword>
<keyword id="KW-0547">Nucleotide-binding</keyword>
<keyword id="KW-0648">Protein biosynthesis</keyword>
<organism>
    <name type="scientific">Microcystis aeruginosa (strain NIES-843 / IAM M-2473)</name>
    <dbReference type="NCBI Taxonomy" id="449447"/>
    <lineage>
        <taxon>Bacteria</taxon>
        <taxon>Bacillati</taxon>
        <taxon>Cyanobacteriota</taxon>
        <taxon>Cyanophyceae</taxon>
        <taxon>Oscillatoriophycideae</taxon>
        <taxon>Chroococcales</taxon>
        <taxon>Microcystaceae</taxon>
        <taxon>Microcystis</taxon>
    </lineage>
</organism>
<proteinExistence type="inferred from homology"/>
<protein>
    <recommendedName>
        <fullName evidence="1">Asparagine--tRNA ligase</fullName>
        <ecNumber evidence="1">6.1.1.22</ecNumber>
    </recommendedName>
    <alternativeName>
        <fullName evidence="1">Asparaginyl-tRNA synthetase</fullName>
        <shortName evidence="1">AsnRS</shortName>
    </alternativeName>
</protein>
<dbReference type="EC" id="6.1.1.22" evidence="1"/>
<dbReference type="EMBL" id="AP009552">
    <property type="protein sequence ID" value="BAG00263.1"/>
    <property type="molecule type" value="Genomic_DNA"/>
</dbReference>
<dbReference type="RefSeq" id="WP_012264099.1">
    <property type="nucleotide sequence ID" value="NC_010296.1"/>
</dbReference>
<dbReference type="SMR" id="B0JN99"/>
<dbReference type="STRING" id="449447.MAE_04410"/>
<dbReference type="PaxDb" id="449447-MAE_04410"/>
<dbReference type="EnsemblBacteria" id="BAG00263">
    <property type="protein sequence ID" value="BAG00263"/>
    <property type="gene ID" value="MAE_04410"/>
</dbReference>
<dbReference type="KEGG" id="mar:MAE_04410"/>
<dbReference type="PATRIC" id="fig|449447.4.peg.416"/>
<dbReference type="eggNOG" id="COG0017">
    <property type="taxonomic scope" value="Bacteria"/>
</dbReference>
<dbReference type="HOGENOM" id="CLU_004553_2_0_3"/>
<dbReference type="BioCyc" id="MAER449447:MAE_RS02030-MONOMER"/>
<dbReference type="Proteomes" id="UP000001510">
    <property type="component" value="Chromosome"/>
</dbReference>
<dbReference type="GO" id="GO:0005737">
    <property type="term" value="C:cytoplasm"/>
    <property type="evidence" value="ECO:0007669"/>
    <property type="project" value="UniProtKB-SubCell"/>
</dbReference>
<dbReference type="GO" id="GO:0004816">
    <property type="term" value="F:asparagine-tRNA ligase activity"/>
    <property type="evidence" value="ECO:0007669"/>
    <property type="project" value="UniProtKB-UniRule"/>
</dbReference>
<dbReference type="GO" id="GO:0005524">
    <property type="term" value="F:ATP binding"/>
    <property type="evidence" value="ECO:0007669"/>
    <property type="project" value="UniProtKB-UniRule"/>
</dbReference>
<dbReference type="GO" id="GO:0003676">
    <property type="term" value="F:nucleic acid binding"/>
    <property type="evidence" value="ECO:0007669"/>
    <property type="project" value="InterPro"/>
</dbReference>
<dbReference type="GO" id="GO:0006421">
    <property type="term" value="P:asparaginyl-tRNA aminoacylation"/>
    <property type="evidence" value="ECO:0007669"/>
    <property type="project" value="UniProtKB-UniRule"/>
</dbReference>
<dbReference type="CDD" id="cd00776">
    <property type="entry name" value="AsxRS_core"/>
    <property type="match status" value="1"/>
</dbReference>
<dbReference type="CDD" id="cd04318">
    <property type="entry name" value="EcAsnRS_like_N"/>
    <property type="match status" value="1"/>
</dbReference>
<dbReference type="FunFam" id="3.30.930.10:FF:000016">
    <property type="entry name" value="Asparagine--tRNA ligase"/>
    <property type="match status" value="1"/>
</dbReference>
<dbReference type="Gene3D" id="3.30.930.10">
    <property type="entry name" value="Bira Bifunctional Protein, Domain 2"/>
    <property type="match status" value="1"/>
</dbReference>
<dbReference type="Gene3D" id="2.40.50.140">
    <property type="entry name" value="Nucleic acid-binding proteins"/>
    <property type="match status" value="1"/>
</dbReference>
<dbReference type="HAMAP" id="MF_00534">
    <property type="entry name" value="Asn_tRNA_synth"/>
    <property type="match status" value="1"/>
</dbReference>
<dbReference type="InterPro" id="IPR004364">
    <property type="entry name" value="Aa-tRNA-synt_II"/>
</dbReference>
<dbReference type="InterPro" id="IPR006195">
    <property type="entry name" value="aa-tRNA-synth_II"/>
</dbReference>
<dbReference type="InterPro" id="IPR045864">
    <property type="entry name" value="aa-tRNA-synth_II/BPL/LPL"/>
</dbReference>
<dbReference type="InterPro" id="IPR004522">
    <property type="entry name" value="Asn-tRNA-ligase"/>
</dbReference>
<dbReference type="InterPro" id="IPR002312">
    <property type="entry name" value="Asp/Asn-tRNA-synth_IIb"/>
</dbReference>
<dbReference type="InterPro" id="IPR012340">
    <property type="entry name" value="NA-bd_OB-fold"/>
</dbReference>
<dbReference type="InterPro" id="IPR004365">
    <property type="entry name" value="NA-bd_OB_tRNA"/>
</dbReference>
<dbReference type="NCBIfam" id="TIGR00457">
    <property type="entry name" value="asnS"/>
    <property type="match status" value="1"/>
</dbReference>
<dbReference type="NCBIfam" id="NF003037">
    <property type="entry name" value="PRK03932.1"/>
    <property type="match status" value="1"/>
</dbReference>
<dbReference type="PANTHER" id="PTHR22594:SF34">
    <property type="entry name" value="ASPARAGINE--TRNA LIGASE, MITOCHONDRIAL-RELATED"/>
    <property type="match status" value="1"/>
</dbReference>
<dbReference type="PANTHER" id="PTHR22594">
    <property type="entry name" value="ASPARTYL/LYSYL-TRNA SYNTHETASE"/>
    <property type="match status" value="1"/>
</dbReference>
<dbReference type="Pfam" id="PF00152">
    <property type="entry name" value="tRNA-synt_2"/>
    <property type="match status" value="1"/>
</dbReference>
<dbReference type="Pfam" id="PF01336">
    <property type="entry name" value="tRNA_anti-codon"/>
    <property type="match status" value="1"/>
</dbReference>
<dbReference type="PRINTS" id="PR01042">
    <property type="entry name" value="TRNASYNTHASP"/>
</dbReference>
<dbReference type="SUPFAM" id="SSF55681">
    <property type="entry name" value="Class II aaRS and biotin synthetases"/>
    <property type="match status" value="1"/>
</dbReference>
<dbReference type="SUPFAM" id="SSF50249">
    <property type="entry name" value="Nucleic acid-binding proteins"/>
    <property type="match status" value="1"/>
</dbReference>
<dbReference type="PROSITE" id="PS50862">
    <property type="entry name" value="AA_TRNA_LIGASE_II"/>
    <property type="match status" value="1"/>
</dbReference>
<feature type="chain" id="PRO_1000081851" description="Asparagine--tRNA ligase">
    <location>
        <begin position="1"/>
        <end position="454"/>
    </location>
</feature>
<evidence type="ECO:0000255" key="1">
    <source>
        <dbReference type="HAMAP-Rule" id="MF_00534"/>
    </source>
</evidence>
<name>SYN_MICAN</name>
<reference key="1">
    <citation type="journal article" date="2007" name="DNA Res.">
        <title>Complete genomic structure of the bloom-forming toxic cyanobacterium Microcystis aeruginosa NIES-843.</title>
        <authorList>
            <person name="Kaneko T."/>
            <person name="Nakajima N."/>
            <person name="Okamoto S."/>
            <person name="Suzuki I."/>
            <person name="Tanabe Y."/>
            <person name="Tamaoki M."/>
            <person name="Nakamura Y."/>
            <person name="Kasai F."/>
            <person name="Watanabe A."/>
            <person name="Kawashima K."/>
            <person name="Kishida Y."/>
            <person name="Ono A."/>
            <person name="Shimizu Y."/>
            <person name="Takahashi C."/>
            <person name="Minami C."/>
            <person name="Fujishiro T."/>
            <person name="Kohara M."/>
            <person name="Katoh M."/>
            <person name="Nakazaki N."/>
            <person name="Nakayama S."/>
            <person name="Yamada M."/>
            <person name="Tabata S."/>
            <person name="Watanabe M.M."/>
        </authorList>
    </citation>
    <scope>NUCLEOTIDE SEQUENCE [LARGE SCALE GENOMIC DNA]</scope>
    <source>
        <strain>NIES-843 / IAM M-247</strain>
    </source>
</reference>
<sequence>MTTRIKEIFQTGQPDQSVTVQGWVRTKRELKEFTFLEVNDGSSLANLQVILEPTLPDYENVLKTISTGAAIAVSGNLVPSPGKGQNIELKAAEITLYGDCPPDYPLQKKRHSFEFLRTIAHLRARTNTLGAVMRVRNACATAIHSFFQEKGFIWVHTPIITANDCEGAGELFTVTSLDLKKPANFAEDFFGKRAYLTVSGQLQAEVMAMALSNVYTFGPTFRAENSNTSRHLAEFWMVEPEMAFCDLEGDQDLAEAFLKYIFKFVLENCPEDLQFFNERIDKTVLSTAENIVNSEFGRITYSEAIELLEKADRQFEFPVEWGVDLQSEHERYLAEELFKKPVIVTNYPKTIKAFYMRLDDNNKTVSAMDILAPKIGEIIGGSQREERLDVLIQRMQEQGMNPDDLWWYLDLRRYGSVPHAGFGLGFERLVQFMTGMTNIRDVIPFPRTPLSADF</sequence>
<accession>B0JN99</accession>